<name>BUBL_PENBR</name>
<evidence type="ECO:0007829" key="1">
    <source>
        <dbReference type="PDB" id="1UOY"/>
    </source>
</evidence>
<keyword id="KW-0002">3D-structure</keyword>
<keyword id="KW-1015">Disulfide bond</keyword>
<keyword id="KW-0964">Secreted</keyword>
<sequence>DTCGSGYNVDQRRTNSGCKAGNGDRHFCGCDRTGVVECKGGKWTEVQDCGSSSCKGTSNGGATC</sequence>
<organism>
    <name type="scientific">Penicillium brevicompactum</name>
    <dbReference type="NCBI Taxonomy" id="5074"/>
    <lineage>
        <taxon>Eukaryota</taxon>
        <taxon>Fungi</taxon>
        <taxon>Dikarya</taxon>
        <taxon>Ascomycota</taxon>
        <taxon>Pezizomycotina</taxon>
        <taxon>Eurotiomycetes</taxon>
        <taxon>Eurotiomycetidae</taxon>
        <taxon>Eurotiales</taxon>
        <taxon>Aspergillaceae</taxon>
        <taxon>Penicillium</taxon>
    </lineage>
</organism>
<comment type="function">
    <text>May act as a toxin. May recognize a molecule or part of a molecule with a negatively charged surface potential.</text>
</comment>
<comment type="subcellular location">
    <subcellularLocation>
        <location>Secreted</location>
    </subcellularLocation>
</comment>
<reference key="1">
    <citation type="journal article" date="2004" name="Acta Crystallogr. D">
        <title>Solving the structure of the bubble protein using the anomalous sulfur signal from single-crystal in-house Cu Kalpha diffraction data only.</title>
        <authorList>
            <person name="Olsen J.G."/>
            <person name="Flensburg C."/>
            <person name="Olsen O."/>
            <person name="Bricogne G."/>
            <person name="Henriksen A."/>
        </authorList>
    </citation>
    <scope>X-RAY CRYSTALLOGRAPHY (1.5 ANGSTROMS)</scope>
</reference>
<protein>
    <recommendedName>
        <fullName>Bubble protein</fullName>
    </recommendedName>
</protein>
<dbReference type="PDB" id="1UOY">
    <property type="method" value="X-ray"/>
    <property type="resolution" value="1.50 A"/>
    <property type="chains" value="A=1-64"/>
</dbReference>
<dbReference type="PDBsum" id="1UOY"/>
<dbReference type="SMR" id="P83799"/>
<dbReference type="EvolutionaryTrace" id="P83799"/>
<dbReference type="GO" id="GO:0005576">
    <property type="term" value="C:extracellular region"/>
    <property type="evidence" value="ECO:0007669"/>
    <property type="project" value="UniProtKB-SubCell"/>
</dbReference>
<dbReference type="Gene3D" id="2.30.130.50">
    <property type="match status" value="1"/>
</dbReference>
<dbReference type="InterPro" id="IPR015308">
    <property type="entry name" value="Bubble"/>
</dbReference>
<dbReference type="InterPro" id="IPR036334">
    <property type="entry name" value="Bubble_sf"/>
</dbReference>
<dbReference type="Pfam" id="PF09227">
    <property type="entry name" value="Bubble"/>
    <property type="match status" value="1"/>
</dbReference>
<dbReference type="SUPFAM" id="SSF103565">
    <property type="entry name" value="Bubble protein"/>
    <property type="match status" value="1"/>
</dbReference>
<proteinExistence type="evidence at protein level"/>
<accession>P83799</accession>
<feature type="chain" id="PRO_0000065011" description="Bubble protein">
    <location>
        <begin position="1"/>
        <end position="64"/>
    </location>
</feature>
<feature type="disulfide bond">
    <location>
        <begin position="3"/>
        <end position="30"/>
    </location>
</feature>
<feature type="disulfide bond">
    <location>
        <begin position="18"/>
        <end position="38"/>
    </location>
</feature>
<feature type="disulfide bond">
    <location>
        <begin position="28"/>
        <end position="54"/>
    </location>
</feature>
<feature type="disulfide bond">
    <location>
        <begin position="49"/>
        <end position="64"/>
    </location>
</feature>
<feature type="helix" evidence="1">
    <location>
        <begin position="20"/>
        <end position="22"/>
    </location>
</feature>
<feature type="strand" evidence="1">
    <location>
        <begin position="26"/>
        <end position="28"/>
    </location>
</feature>
<feature type="strand" evidence="1">
    <location>
        <begin position="32"/>
        <end position="39"/>
    </location>
</feature>
<feature type="strand" evidence="1">
    <location>
        <begin position="42"/>
        <end position="48"/>
    </location>
</feature>
<feature type="strand" evidence="1">
    <location>
        <begin position="50"/>
        <end position="52"/>
    </location>
</feature>
<feature type="strand" evidence="1">
    <location>
        <begin position="55"/>
        <end position="57"/>
    </location>
</feature>
<feature type="strand" evidence="1">
    <location>
        <begin position="60"/>
        <end position="63"/>
    </location>
</feature>